<name>SYH_STRP2</name>
<proteinExistence type="inferred from homology"/>
<keyword id="KW-0030">Aminoacyl-tRNA synthetase</keyword>
<keyword id="KW-0067">ATP-binding</keyword>
<keyword id="KW-0963">Cytoplasm</keyword>
<keyword id="KW-0436">Ligase</keyword>
<keyword id="KW-0547">Nucleotide-binding</keyword>
<keyword id="KW-0648">Protein biosynthesis</keyword>
<keyword id="KW-1185">Reference proteome</keyword>
<comment type="catalytic activity">
    <reaction evidence="1">
        <text>tRNA(His) + L-histidine + ATP = L-histidyl-tRNA(His) + AMP + diphosphate + H(+)</text>
        <dbReference type="Rhea" id="RHEA:17313"/>
        <dbReference type="Rhea" id="RHEA-COMP:9665"/>
        <dbReference type="Rhea" id="RHEA-COMP:9689"/>
        <dbReference type="ChEBI" id="CHEBI:15378"/>
        <dbReference type="ChEBI" id="CHEBI:30616"/>
        <dbReference type="ChEBI" id="CHEBI:33019"/>
        <dbReference type="ChEBI" id="CHEBI:57595"/>
        <dbReference type="ChEBI" id="CHEBI:78442"/>
        <dbReference type="ChEBI" id="CHEBI:78527"/>
        <dbReference type="ChEBI" id="CHEBI:456215"/>
        <dbReference type="EC" id="6.1.1.21"/>
    </reaction>
</comment>
<comment type="subunit">
    <text evidence="1">Homodimer.</text>
</comment>
<comment type="subcellular location">
    <subcellularLocation>
        <location evidence="1">Cytoplasm</location>
    </subcellularLocation>
</comment>
<comment type="similarity">
    <text evidence="1">Belongs to the class-II aminoacyl-tRNA synthetase family.</text>
</comment>
<gene>
    <name evidence="1" type="primary">hisS</name>
    <name type="ordered locus">SPD_1950</name>
</gene>
<accession>Q04I50</accession>
<evidence type="ECO:0000255" key="1">
    <source>
        <dbReference type="HAMAP-Rule" id="MF_00127"/>
    </source>
</evidence>
<protein>
    <recommendedName>
        <fullName evidence="1">Histidine--tRNA ligase</fullName>
        <ecNumber evidence="1">6.1.1.21</ecNumber>
    </recommendedName>
    <alternativeName>
        <fullName evidence="1">Histidyl-tRNA synthetase</fullName>
        <shortName evidence="1">HisRS</shortName>
    </alternativeName>
</protein>
<sequence>MKLQKPKGTQDILPAESAKWQYVEGFAREIFKRYNYAEVRTPIFEHYEVISRSVGDTTDIVTKEMYDFYDKGDRHITLRPEGTAPVVRSYVENKLFAPEVQKPSKFYYMGPMFRYERPQAGRLRQFHQIGVECFGSSNPATDVETIAMAAHFLKEIGIQGVKLHLNTLGNPESRAAYRQALIDYLTPLKETLSKDSQRRLEENPLRVLDSKEKEDKVAVENAPSILDFLDEESQTHFDAVRQMLENLGVDYIIDTNMVRGLDYYNHTIFEFITEIEGNDLTVCAGGRYDGLVAYFGGPETAGFGFGLGVERLLLILEKQGVALPIENALDVYIAVLGDGANVKALELVQALRQQGFKAERDYLNRKLKAQFKSADVFAAKTLITLGESEVESGQVTVKNNQTREEVQVSLETISQNFSEIFEKLGFYTQ</sequence>
<organism>
    <name type="scientific">Streptococcus pneumoniae serotype 2 (strain D39 / NCTC 7466)</name>
    <dbReference type="NCBI Taxonomy" id="373153"/>
    <lineage>
        <taxon>Bacteria</taxon>
        <taxon>Bacillati</taxon>
        <taxon>Bacillota</taxon>
        <taxon>Bacilli</taxon>
        <taxon>Lactobacillales</taxon>
        <taxon>Streptococcaceae</taxon>
        <taxon>Streptococcus</taxon>
    </lineage>
</organism>
<dbReference type="EC" id="6.1.1.21" evidence="1"/>
<dbReference type="EMBL" id="CP000410">
    <property type="protein sequence ID" value="ABJ54083.1"/>
    <property type="molecule type" value="Genomic_DNA"/>
</dbReference>
<dbReference type="RefSeq" id="WP_000775873.1">
    <property type="nucleotide sequence ID" value="NZ_JAMLJR010000012.1"/>
</dbReference>
<dbReference type="SMR" id="Q04I50"/>
<dbReference type="PaxDb" id="373153-SPD_1950"/>
<dbReference type="KEGG" id="spd:SPD_1950"/>
<dbReference type="eggNOG" id="COG0124">
    <property type="taxonomic scope" value="Bacteria"/>
</dbReference>
<dbReference type="HOGENOM" id="CLU_025113_1_1_9"/>
<dbReference type="BioCyc" id="SPNE373153:G1G6V-2095-MONOMER"/>
<dbReference type="Proteomes" id="UP000001452">
    <property type="component" value="Chromosome"/>
</dbReference>
<dbReference type="GO" id="GO:0005737">
    <property type="term" value="C:cytoplasm"/>
    <property type="evidence" value="ECO:0007669"/>
    <property type="project" value="UniProtKB-SubCell"/>
</dbReference>
<dbReference type="GO" id="GO:0005524">
    <property type="term" value="F:ATP binding"/>
    <property type="evidence" value="ECO:0007669"/>
    <property type="project" value="UniProtKB-UniRule"/>
</dbReference>
<dbReference type="GO" id="GO:0140096">
    <property type="term" value="F:catalytic activity, acting on a protein"/>
    <property type="evidence" value="ECO:0007669"/>
    <property type="project" value="UniProtKB-ARBA"/>
</dbReference>
<dbReference type="GO" id="GO:0004821">
    <property type="term" value="F:histidine-tRNA ligase activity"/>
    <property type="evidence" value="ECO:0007669"/>
    <property type="project" value="UniProtKB-UniRule"/>
</dbReference>
<dbReference type="GO" id="GO:0016740">
    <property type="term" value="F:transferase activity"/>
    <property type="evidence" value="ECO:0007669"/>
    <property type="project" value="UniProtKB-ARBA"/>
</dbReference>
<dbReference type="GO" id="GO:0006427">
    <property type="term" value="P:histidyl-tRNA aminoacylation"/>
    <property type="evidence" value="ECO:0007669"/>
    <property type="project" value="UniProtKB-UniRule"/>
</dbReference>
<dbReference type="CDD" id="cd00773">
    <property type="entry name" value="HisRS-like_core"/>
    <property type="match status" value="1"/>
</dbReference>
<dbReference type="CDD" id="cd00859">
    <property type="entry name" value="HisRS_anticodon"/>
    <property type="match status" value="1"/>
</dbReference>
<dbReference type="FunFam" id="3.30.930.10:FF:000005">
    <property type="entry name" value="Histidine--tRNA ligase"/>
    <property type="match status" value="1"/>
</dbReference>
<dbReference type="FunFam" id="3.40.50.800:FF:000022">
    <property type="entry name" value="Histidine--tRNA ligase"/>
    <property type="match status" value="1"/>
</dbReference>
<dbReference type="Gene3D" id="3.40.50.800">
    <property type="entry name" value="Anticodon-binding domain"/>
    <property type="match status" value="1"/>
</dbReference>
<dbReference type="Gene3D" id="3.30.930.10">
    <property type="entry name" value="Bira Bifunctional Protein, Domain 2"/>
    <property type="match status" value="1"/>
</dbReference>
<dbReference type="HAMAP" id="MF_00127">
    <property type="entry name" value="His_tRNA_synth"/>
    <property type="match status" value="1"/>
</dbReference>
<dbReference type="InterPro" id="IPR006195">
    <property type="entry name" value="aa-tRNA-synth_II"/>
</dbReference>
<dbReference type="InterPro" id="IPR045864">
    <property type="entry name" value="aa-tRNA-synth_II/BPL/LPL"/>
</dbReference>
<dbReference type="InterPro" id="IPR004154">
    <property type="entry name" value="Anticodon-bd"/>
</dbReference>
<dbReference type="InterPro" id="IPR036621">
    <property type="entry name" value="Anticodon-bd_dom_sf"/>
</dbReference>
<dbReference type="InterPro" id="IPR015807">
    <property type="entry name" value="His-tRNA-ligase"/>
</dbReference>
<dbReference type="InterPro" id="IPR041715">
    <property type="entry name" value="HisRS-like_core"/>
</dbReference>
<dbReference type="InterPro" id="IPR004516">
    <property type="entry name" value="HisRS/HisZ"/>
</dbReference>
<dbReference type="InterPro" id="IPR033656">
    <property type="entry name" value="HisRS_anticodon"/>
</dbReference>
<dbReference type="NCBIfam" id="TIGR00442">
    <property type="entry name" value="hisS"/>
    <property type="match status" value="1"/>
</dbReference>
<dbReference type="PANTHER" id="PTHR43707:SF1">
    <property type="entry name" value="HISTIDINE--TRNA LIGASE, MITOCHONDRIAL-RELATED"/>
    <property type="match status" value="1"/>
</dbReference>
<dbReference type="PANTHER" id="PTHR43707">
    <property type="entry name" value="HISTIDYL-TRNA SYNTHETASE"/>
    <property type="match status" value="1"/>
</dbReference>
<dbReference type="Pfam" id="PF03129">
    <property type="entry name" value="HGTP_anticodon"/>
    <property type="match status" value="1"/>
</dbReference>
<dbReference type="Pfam" id="PF13393">
    <property type="entry name" value="tRNA-synt_His"/>
    <property type="match status" value="1"/>
</dbReference>
<dbReference type="PIRSF" id="PIRSF001549">
    <property type="entry name" value="His-tRNA_synth"/>
    <property type="match status" value="1"/>
</dbReference>
<dbReference type="SUPFAM" id="SSF52954">
    <property type="entry name" value="Class II aaRS ABD-related"/>
    <property type="match status" value="1"/>
</dbReference>
<dbReference type="SUPFAM" id="SSF55681">
    <property type="entry name" value="Class II aaRS and biotin synthetases"/>
    <property type="match status" value="1"/>
</dbReference>
<dbReference type="PROSITE" id="PS50862">
    <property type="entry name" value="AA_TRNA_LIGASE_II"/>
    <property type="match status" value="1"/>
</dbReference>
<feature type="chain" id="PRO_1000016463" description="Histidine--tRNA ligase">
    <location>
        <begin position="1"/>
        <end position="429"/>
    </location>
</feature>
<reference key="1">
    <citation type="journal article" date="2007" name="J. Bacteriol.">
        <title>Genome sequence of Avery's virulent serotype 2 strain D39 of Streptococcus pneumoniae and comparison with that of unencapsulated laboratory strain R6.</title>
        <authorList>
            <person name="Lanie J.A."/>
            <person name="Ng W.-L."/>
            <person name="Kazmierczak K.M."/>
            <person name="Andrzejewski T.M."/>
            <person name="Davidsen T.M."/>
            <person name="Wayne K.J."/>
            <person name="Tettelin H."/>
            <person name="Glass J.I."/>
            <person name="Winkler M.E."/>
        </authorList>
    </citation>
    <scope>NUCLEOTIDE SEQUENCE [LARGE SCALE GENOMIC DNA]</scope>
    <source>
        <strain>D39 / NCTC 7466</strain>
    </source>
</reference>